<gene>
    <name type="primary">CYIIIB</name>
</gene>
<comment type="function">
    <text>Actins are highly conserved proteins that are involved in various types of cell motility and are ubiquitously expressed in all eukaryotic cells.</text>
</comment>
<comment type="catalytic activity">
    <reaction evidence="2">
        <text>ATP + H2O = ADP + phosphate + H(+)</text>
        <dbReference type="Rhea" id="RHEA:13065"/>
        <dbReference type="ChEBI" id="CHEBI:15377"/>
        <dbReference type="ChEBI" id="CHEBI:15378"/>
        <dbReference type="ChEBI" id="CHEBI:30616"/>
        <dbReference type="ChEBI" id="CHEBI:43474"/>
        <dbReference type="ChEBI" id="CHEBI:456216"/>
    </reaction>
</comment>
<comment type="subcellular location">
    <subcellularLocation>
        <location>Cytoplasm</location>
    </subcellularLocation>
    <subcellularLocation>
        <location>Cytoplasm</location>
        <location>Cytoskeleton</location>
    </subcellularLocation>
</comment>
<comment type="tissue specificity">
    <text>Confined to aboral ectoderm cells.</text>
</comment>
<comment type="developmental stage">
    <text>Sea urchin larval development.</text>
</comment>
<comment type="similarity">
    <text evidence="3">Belongs to the actin family.</text>
</comment>
<evidence type="ECO:0000250" key="1"/>
<evidence type="ECO:0000250" key="2">
    <source>
        <dbReference type="UniProtKB" id="P68137"/>
    </source>
</evidence>
<evidence type="ECO:0000305" key="3"/>
<reference key="1">
    <citation type="journal article" date="1988" name="J. Mol. Evol.">
        <title>DNA sequence analysis and structural relationships among the cytoskeletal actin genes of the sea urchin Strongylocentrotus purpuratus.</title>
        <authorList>
            <person name="Durica D.S."/>
            <person name="Garza D."/>
            <person name="Restrepo M.A."/>
            <person name="Hryniewicz M.M."/>
        </authorList>
    </citation>
    <scope>NUCLEOTIDE SEQUENCE [GENOMIC DNA]</scope>
</reference>
<feature type="propeptide" id="PRO_0000000732" description="Removed in mature form">
    <location>
        <begin position="1"/>
        <end position="2"/>
    </location>
</feature>
<feature type="chain" id="PRO_0000000733" description="Actin, cytoskeletal 3B">
    <location>
        <begin position="3"/>
        <end position="376"/>
    </location>
</feature>
<feature type="modified residue" description="N-acetylaspartate" evidence="1">
    <location>
        <position position="3"/>
    </location>
</feature>
<protein>
    <recommendedName>
        <fullName>Actin, cytoskeletal 3B</fullName>
        <ecNumber evidence="2">3.6.4.-</ecNumber>
    </recommendedName>
    <alternativeName>
        <fullName>Actin, cytoskeletal IIIB</fullName>
    </alternativeName>
</protein>
<sequence>MCDDDVAALVVDNGSGMVKAGFAGDDAPRAVFPSIVGRPRHQGVMVGMGQKDSYVGDEAQSKRGILTLKYPIEHGIVTNWDDMEKIWHHTFYNELRVAPEEHPVLLTEAPLNPKANREKMTQIMFETFNSPAMYVAIQAVLSLYASGRTTGIVFDSGDGVSHTVPIYEGYALPHAIIRLDLAGRDLTDYLMKILTERGYSFTTTAEREIVRDIKEKLCYVALDFEEEMQTAASSSSLEKSYELPDGQVITIGNERFRCSETLLQPSFIGMESAGIHETCYNSIMKCDVDIRKDLYANTVLSGASTMFPGIADRMQKEIVALAPPTMKIKIIAPPERKYSVWIGGSILASLSTFQQMWISKQEYDESGPSIVHRKCF</sequence>
<proteinExistence type="evidence at transcript level"/>
<accession>P18499</accession>
<name>ACTF_STRPU</name>
<dbReference type="EC" id="3.6.4.-" evidence="2"/>
<dbReference type="EMBL" id="M35324">
    <property type="protein sequence ID" value="AAA30043.1"/>
    <property type="molecule type" value="Genomic_DNA"/>
</dbReference>
<dbReference type="RefSeq" id="NP_999692.1">
    <property type="nucleotide sequence ID" value="NM_214527.1"/>
</dbReference>
<dbReference type="SMR" id="P18499"/>
<dbReference type="FunCoup" id="P18499">
    <property type="interactions" value="1849"/>
</dbReference>
<dbReference type="STRING" id="7668.P18499"/>
<dbReference type="EnsemblMetazoa" id="NM_214527">
    <property type="protein sequence ID" value="NP_999692"/>
    <property type="gene ID" value="GeneID_373296"/>
</dbReference>
<dbReference type="GeneID" id="373296"/>
<dbReference type="KEGG" id="spu:373296"/>
<dbReference type="CTD" id="373296"/>
<dbReference type="eggNOG" id="KOG0676">
    <property type="taxonomic scope" value="Eukaryota"/>
</dbReference>
<dbReference type="HOGENOM" id="CLU_027965_0_2_1"/>
<dbReference type="InParanoid" id="P18499"/>
<dbReference type="OrthoDB" id="10249208at2759"/>
<dbReference type="PhylomeDB" id="P18499"/>
<dbReference type="Proteomes" id="UP000007110">
    <property type="component" value="Unassembled WGS sequence"/>
</dbReference>
<dbReference type="GO" id="GO:0005737">
    <property type="term" value="C:cytoplasm"/>
    <property type="evidence" value="ECO:0007669"/>
    <property type="project" value="UniProtKB-SubCell"/>
</dbReference>
<dbReference type="GO" id="GO:0005856">
    <property type="term" value="C:cytoskeleton"/>
    <property type="evidence" value="ECO:0007669"/>
    <property type="project" value="UniProtKB-SubCell"/>
</dbReference>
<dbReference type="GO" id="GO:0005524">
    <property type="term" value="F:ATP binding"/>
    <property type="evidence" value="ECO:0007669"/>
    <property type="project" value="UniProtKB-KW"/>
</dbReference>
<dbReference type="GO" id="GO:0016787">
    <property type="term" value="F:hydrolase activity"/>
    <property type="evidence" value="ECO:0007669"/>
    <property type="project" value="UniProtKB-KW"/>
</dbReference>
<dbReference type="CDD" id="cd10224">
    <property type="entry name" value="ASKHA_NBD_actin"/>
    <property type="match status" value="1"/>
</dbReference>
<dbReference type="FunFam" id="2.30.36.70:FF:000001">
    <property type="entry name" value="Actin, alpha skeletal muscle"/>
    <property type="match status" value="1"/>
</dbReference>
<dbReference type="FunFam" id="3.30.420.40:FF:000291">
    <property type="entry name" value="Actin, alpha skeletal muscle"/>
    <property type="match status" value="1"/>
</dbReference>
<dbReference type="FunFam" id="3.90.640.10:FF:000047">
    <property type="entry name" value="Actin, alpha skeletal muscle"/>
    <property type="match status" value="1"/>
</dbReference>
<dbReference type="FunFam" id="3.30.420.40:FF:000404">
    <property type="entry name" value="Major actin"/>
    <property type="match status" value="1"/>
</dbReference>
<dbReference type="FunFam" id="3.30.420.40:FF:000058">
    <property type="entry name" value="Putative actin-related protein 5"/>
    <property type="match status" value="1"/>
</dbReference>
<dbReference type="Gene3D" id="3.30.420.40">
    <property type="match status" value="2"/>
</dbReference>
<dbReference type="Gene3D" id="3.90.640.10">
    <property type="entry name" value="Actin, Chain A, domain 4"/>
    <property type="match status" value="1"/>
</dbReference>
<dbReference type="InterPro" id="IPR004000">
    <property type="entry name" value="Actin"/>
</dbReference>
<dbReference type="InterPro" id="IPR020902">
    <property type="entry name" value="Actin/actin-like_CS"/>
</dbReference>
<dbReference type="InterPro" id="IPR004001">
    <property type="entry name" value="Actin_CS"/>
</dbReference>
<dbReference type="InterPro" id="IPR043129">
    <property type="entry name" value="ATPase_NBD"/>
</dbReference>
<dbReference type="PANTHER" id="PTHR11937">
    <property type="entry name" value="ACTIN"/>
    <property type="match status" value="1"/>
</dbReference>
<dbReference type="Pfam" id="PF00022">
    <property type="entry name" value="Actin"/>
    <property type="match status" value="1"/>
</dbReference>
<dbReference type="PRINTS" id="PR00190">
    <property type="entry name" value="ACTIN"/>
</dbReference>
<dbReference type="SMART" id="SM00268">
    <property type="entry name" value="ACTIN"/>
    <property type="match status" value="1"/>
</dbReference>
<dbReference type="SUPFAM" id="SSF53067">
    <property type="entry name" value="Actin-like ATPase domain"/>
    <property type="match status" value="2"/>
</dbReference>
<dbReference type="PROSITE" id="PS00406">
    <property type="entry name" value="ACTINS_1"/>
    <property type="match status" value="1"/>
</dbReference>
<dbReference type="PROSITE" id="PS00432">
    <property type="entry name" value="ACTINS_2"/>
    <property type="match status" value="1"/>
</dbReference>
<dbReference type="PROSITE" id="PS01132">
    <property type="entry name" value="ACTINS_ACT_LIKE"/>
    <property type="match status" value="1"/>
</dbReference>
<keyword id="KW-0007">Acetylation</keyword>
<keyword id="KW-0067">ATP-binding</keyword>
<keyword id="KW-0963">Cytoplasm</keyword>
<keyword id="KW-0206">Cytoskeleton</keyword>
<keyword id="KW-0378">Hydrolase</keyword>
<keyword id="KW-0547">Nucleotide-binding</keyword>
<keyword id="KW-1185">Reference proteome</keyword>
<organism>
    <name type="scientific">Strongylocentrotus purpuratus</name>
    <name type="common">Purple sea urchin</name>
    <dbReference type="NCBI Taxonomy" id="7668"/>
    <lineage>
        <taxon>Eukaryota</taxon>
        <taxon>Metazoa</taxon>
        <taxon>Echinodermata</taxon>
        <taxon>Eleutherozoa</taxon>
        <taxon>Echinozoa</taxon>
        <taxon>Echinoidea</taxon>
        <taxon>Euechinoidea</taxon>
        <taxon>Echinacea</taxon>
        <taxon>Camarodonta</taxon>
        <taxon>Echinidea</taxon>
        <taxon>Strongylocentrotidae</taxon>
        <taxon>Strongylocentrotus</taxon>
    </lineage>
</organism>